<feature type="chain" id="PRO_0000167091" description="Cysteine synthase">
    <location>
        <begin position="1"/>
        <end position="307"/>
    </location>
</feature>
<feature type="binding site" evidence="1">
    <location>
        <position position="72"/>
    </location>
    <ligand>
        <name>pyridoxal 5'-phosphate</name>
        <dbReference type="ChEBI" id="CHEBI:597326"/>
    </ligand>
</feature>
<feature type="binding site" evidence="1">
    <location>
        <begin position="176"/>
        <end position="180"/>
    </location>
    <ligand>
        <name>pyridoxal 5'-phosphate</name>
        <dbReference type="ChEBI" id="CHEBI:597326"/>
    </ligand>
</feature>
<feature type="binding site" evidence="1">
    <location>
        <position position="263"/>
    </location>
    <ligand>
        <name>pyridoxal 5'-phosphate</name>
        <dbReference type="ChEBI" id="CHEBI:597326"/>
    </ligand>
</feature>
<feature type="modified residue" description="N6-(pyridoxal phosphate)lysine" evidence="1">
    <location>
        <position position="42"/>
    </location>
</feature>
<gene>
    <name type="primary">cysK</name>
</gene>
<dbReference type="EC" id="2.5.1.47"/>
<dbReference type="EMBL" id="Z50729">
    <property type="protein sequence ID" value="CAA90597.1"/>
    <property type="molecule type" value="Genomic_DNA"/>
</dbReference>
<dbReference type="PIR" id="S58299">
    <property type="entry name" value="S58299"/>
</dbReference>
<dbReference type="SMR" id="Q59447"/>
<dbReference type="UniPathway" id="UPA00136">
    <property type="reaction ID" value="UER00200"/>
</dbReference>
<dbReference type="GO" id="GO:0004124">
    <property type="term" value="F:cysteine synthase activity"/>
    <property type="evidence" value="ECO:0007669"/>
    <property type="project" value="UniProtKB-EC"/>
</dbReference>
<dbReference type="GO" id="GO:0006535">
    <property type="term" value="P:cysteine biosynthetic process from serine"/>
    <property type="evidence" value="ECO:0007669"/>
    <property type="project" value="InterPro"/>
</dbReference>
<dbReference type="CDD" id="cd01561">
    <property type="entry name" value="CBS_like"/>
    <property type="match status" value="1"/>
</dbReference>
<dbReference type="FunFam" id="3.40.50.1100:FF:000003">
    <property type="entry name" value="Cystathionine beta-synthase"/>
    <property type="match status" value="1"/>
</dbReference>
<dbReference type="Gene3D" id="3.40.50.1100">
    <property type="match status" value="2"/>
</dbReference>
<dbReference type="InterPro" id="IPR005856">
    <property type="entry name" value="Cys_synth"/>
</dbReference>
<dbReference type="InterPro" id="IPR050214">
    <property type="entry name" value="Cys_Synth/Cystath_Beta-Synth"/>
</dbReference>
<dbReference type="InterPro" id="IPR005859">
    <property type="entry name" value="CysK"/>
</dbReference>
<dbReference type="InterPro" id="IPR001216">
    <property type="entry name" value="P-phosphate_BS"/>
</dbReference>
<dbReference type="InterPro" id="IPR001926">
    <property type="entry name" value="TrpB-like_PALP"/>
</dbReference>
<dbReference type="InterPro" id="IPR036052">
    <property type="entry name" value="TrpB-like_PALP_sf"/>
</dbReference>
<dbReference type="NCBIfam" id="TIGR01139">
    <property type="entry name" value="cysK"/>
    <property type="match status" value="1"/>
</dbReference>
<dbReference type="NCBIfam" id="TIGR01136">
    <property type="entry name" value="cysKM"/>
    <property type="match status" value="1"/>
</dbReference>
<dbReference type="PANTHER" id="PTHR10314">
    <property type="entry name" value="CYSTATHIONINE BETA-SYNTHASE"/>
    <property type="match status" value="1"/>
</dbReference>
<dbReference type="Pfam" id="PF00291">
    <property type="entry name" value="PALP"/>
    <property type="match status" value="1"/>
</dbReference>
<dbReference type="SUPFAM" id="SSF53686">
    <property type="entry name" value="Tryptophan synthase beta subunit-like PLP-dependent enzymes"/>
    <property type="match status" value="1"/>
</dbReference>
<dbReference type="PROSITE" id="PS00901">
    <property type="entry name" value="CYS_SYNTHASE"/>
    <property type="match status" value="1"/>
</dbReference>
<comment type="catalytic activity">
    <reaction>
        <text>O-acetyl-L-serine + hydrogen sulfide = L-cysteine + acetate</text>
        <dbReference type="Rhea" id="RHEA:14829"/>
        <dbReference type="ChEBI" id="CHEBI:29919"/>
        <dbReference type="ChEBI" id="CHEBI:30089"/>
        <dbReference type="ChEBI" id="CHEBI:35235"/>
        <dbReference type="ChEBI" id="CHEBI:58340"/>
        <dbReference type="EC" id="2.5.1.47"/>
    </reaction>
</comment>
<comment type="cofactor">
    <cofactor>
        <name>pyridoxal 5'-phosphate</name>
        <dbReference type="ChEBI" id="CHEBI:597326"/>
    </cofactor>
</comment>
<comment type="pathway">
    <text>Amino-acid biosynthesis; L-cysteine biosynthesis; L-cysteine from L-serine: step 2/2.</text>
</comment>
<comment type="similarity">
    <text evidence="2">Belongs to the cysteine synthase/cystathionine beta-synthase family.</text>
</comment>
<organism>
    <name type="scientific">Flavobacterium sp. (strain K3-15 / DSM ID92-509)</name>
    <dbReference type="NCBI Taxonomy" id="268949"/>
    <lineage>
        <taxon>Bacteria</taxon>
        <taxon>Pseudomonadati</taxon>
        <taxon>Bacteroidota</taxon>
        <taxon>Flavobacteriia</taxon>
        <taxon>Flavobacteriales</taxon>
        <taxon>Flavobacteriaceae</taxon>
        <taxon>Flavobacterium</taxon>
    </lineage>
</organism>
<keyword id="KW-0028">Amino-acid biosynthesis</keyword>
<keyword id="KW-0198">Cysteine biosynthesis</keyword>
<keyword id="KW-0663">Pyridoxal phosphate</keyword>
<keyword id="KW-0808">Transferase</keyword>
<protein>
    <recommendedName>
        <fullName>Cysteine synthase</fullName>
        <shortName>CSase</shortName>
        <ecNumber>2.5.1.47</ecNumber>
    </recommendedName>
    <alternativeName>
        <fullName>O-acetylserine (thiol)-lyase</fullName>
        <shortName>OAS-TL</shortName>
    </alternativeName>
    <alternativeName>
        <fullName>O-acetylserine sulfhydrylase</fullName>
    </alternativeName>
</protein>
<sequence>MKFQNALETIGNTPVVKINNLFNSDHEIWIKLEKSNPGGSIKDRIALAMIEDAEAKGLLNKDSTIIEPTSGNTGIGLALVAAVKGYKLILVMPESMSIERRKIMEAYGAEFVLTPREKGMKGAIEKANELAEETPNSWIPRQFDNPANVKIHVETTAQEILQDFPEGLDYVITGVGTGGHITGIAKALKEKYPNLKVIAVEPELSPVLSGGSPAPHPLQGLGAGFVPSILDITLLDGVITVGKDEAYEYAINAAKKEGLFCGSFHRSRLSRYRKTFTGNTAWSKNSLPLITTPEKGIFLLRDSSKIL</sequence>
<reference key="1">
    <citation type="journal article" date="1996" name="FEMS Microbiol. Lett.">
        <title>Isolation of a gene encoding cysteine synthase from Flavobacterium K3-15.</title>
        <authorList>
            <person name="Mueller R."/>
            <person name="Kuttler E."/>
            <person name="Lanz C."/>
            <person name="Drewks C."/>
            <person name="Schmidt K."/>
        </authorList>
    </citation>
    <scope>NUCLEOTIDE SEQUENCE [GENOMIC DNA]</scope>
</reference>
<accession>Q59447</accession>
<name>CYSK_FLAS3</name>
<evidence type="ECO:0000250" key="1"/>
<evidence type="ECO:0000305" key="2"/>
<proteinExistence type="inferred from homology"/>